<evidence type="ECO:0000250" key="1"/>
<evidence type="ECO:0000255" key="2">
    <source>
        <dbReference type="PROSITE-ProRule" id="PRU00981"/>
    </source>
</evidence>
<evidence type="ECO:0000256" key="3">
    <source>
        <dbReference type="SAM" id="MobiDB-lite"/>
    </source>
</evidence>
<evidence type="ECO:0000305" key="4"/>
<dbReference type="EMBL" id="M31118">
    <property type="protein sequence ID" value="AAA49902.1"/>
    <property type="molecule type" value="mRNA"/>
</dbReference>
<dbReference type="PIR" id="C34783">
    <property type="entry name" value="C34783"/>
</dbReference>
<dbReference type="SMR" id="P16076"/>
<dbReference type="AGR" id="Xenbase:XB-GENE-6252600"/>
<dbReference type="Xenbase" id="XB-GENE-6252600">
    <property type="gene designation" value="myod1.L"/>
</dbReference>
<dbReference type="Proteomes" id="UP000186698">
    <property type="component" value="Unplaced"/>
</dbReference>
<dbReference type="GO" id="GO:0005634">
    <property type="term" value="C:nucleus"/>
    <property type="evidence" value="ECO:0007669"/>
    <property type="project" value="UniProtKB-SubCell"/>
</dbReference>
<dbReference type="GO" id="GO:0001216">
    <property type="term" value="F:DNA-binding transcription activator activity"/>
    <property type="evidence" value="ECO:0000250"/>
    <property type="project" value="UniProtKB"/>
</dbReference>
<dbReference type="GO" id="GO:0000981">
    <property type="term" value="F:DNA-binding transcription factor activity, RNA polymerase II-specific"/>
    <property type="evidence" value="ECO:0000318"/>
    <property type="project" value="GO_Central"/>
</dbReference>
<dbReference type="GO" id="GO:0070888">
    <property type="term" value="F:E-box binding"/>
    <property type="evidence" value="ECO:0000250"/>
    <property type="project" value="UniProtKB"/>
</dbReference>
<dbReference type="GO" id="GO:1990841">
    <property type="term" value="F:promoter-specific chromatin binding"/>
    <property type="evidence" value="ECO:0000250"/>
    <property type="project" value="UniProtKB"/>
</dbReference>
<dbReference type="GO" id="GO:0046983">
    <property type="term" value="F:protein dimerization activity"/>
    <property type="evidence" value="ECO:0007669"/>
    <property type="project" value="InterPro"/>
</dbReference>
<dbReference type="GO" id="GO:0000978">
    <property type="term" value="F:RNA polymerase II cis-regulatory region sequence-specific DNA binding"/>
    <property type="evidence" value="ECO:0000318"/>
    <property type="project" value="GO_Central"/>
</dbReference>
<dbReference type="GO" id="GO:0071392">
    <property type="term" value="P:cellular response to estradiol stimulus"/>
    <property type="evidence" value="ECO:0000250"/>
    <property type="project" value="UniProtKB"/>
</dbReference>
<dbReference type="GO" id="GO:0045663">
    <property type="term" value="P:positive regulation of myoblast differentiation"/>
    <property type="evidence" value="ECO:0000318"/>
    <property type="project" value="GO_Central"/>
</dbReference>
<dbReference type="GO" id="GO:0048743">
    <property type="term" value="P:positive regulation of skeletal muscle fiber development"/>
    <property type="evidence" value="ECO:0000318"/>
    <property type="project" value="GO_Central"/>
</dbReference>
<dbReference type="GO" id="GO:1905382">
    <property type="term" value="P:positive regulation of snRNA transcription by RNA polymerase II"/>
    <property type="evidence" value="ECO:0000250"/>
    <property type="project" value="UniProtKB"/>
</dbReference>
<dbReference type="GO" id="GO:0045944">
    <property type="term" value="P:positive regulation of transcription by RNA polymerase II"/>
    <property type="evidence" value="ECO:0000250"/>
    <property type="project" value="UniProtKB"/>
</dbReference>
<dbReference type="GO" id="GO:0006357">
    <property type="term" value="P:regulation of transcription by RNA polymerase II"/>
    <property type="evidence" value="ECO:0000318"/>
    <property type="project" value="GO_Central"/>
</dbReference>
<dbReference type="GO" id="GO:0035914">
    <property type="term" value="P:skeletal muscle cell differentiation"/>
    <property type="evidence" value="ECO:0000318"/>
    <property type="project" value="GO_Central"/>
</dbReference>
<dbReference type="CDD" id="cd18936">
    <property type="entry name" value="bHLH_TS_MYOD1_Myf3"/>
    <property type="match status" value="1"/>
</dbReference>
<dbReference type="FunFam" id="4.10.280.10:FF:000005">
    <property type="entry name" value="Myogenic factor"/>
    <property type="match status" value="1"/>
</dbReference>
<dbReference type="Gene3D" id="4.10.280.10">
    <property type="entry name" value="Helix-loop-helix DNA-binding domain"/>
    <property type="match status" value="1"/>
</dbReference>
<dbReference type="InterPro" id="IPR011598">
    <property type="entry name" value="bHLH_dom"/>
</dbReference>
<dbReference type="InterPro" id="IPR036638">
    <property type="entry name" value="HLH_DNA-bd_sf"/>
</dbReference>
<dbReference type="InterPro" id="IPR022032">
    <property type="entry name" value="Myf5"/>
</dbReference>
<dbReference type="InterPro" id="IPR002546">
    <property type="entry name" value="MyoD_N"/>
</dbReference>
<dbReference type="InterPro" id="IPR039704">
    <property type="entry name" value="Myogenic_factor"/>
</dbReference>
<dbReference type="PANTHER" id="PTHR11534:SF2">
    <property type="entry name" value="MYOBLAST DETERMINATION PROTEIN 1"/>
    <property type="match status" value="1"/>
</dbReference>
<dbReference type="PANTHER" id="PTHR11534">
    <property type="entry name" value="MYOGENIC FACTOR"/>
    <property type="match status" value="1"/>
</dbReference>
<dbReference type="Pfam" id="PF01586">
    <property type="entry name" value="Basic"/>
    <property type="match status" value="1"/>
</dbReference>
<dbReference type="Pfam" id="PF00010">
    <property type="entry name" value="HLH"/>
    <property type="match status" value="1"/>
</dbReference>
<dbReference type="Pfam" id="PF12232">
    <property type="entry name" value="Myf5"/>
    <property type="match status" value="1"/>
</dbReference>
<dbReference type="SMART" id="SM00520">
    <property type="entry name" value="BASIC"/>
    <property type="match status" value="1"/>
</dbReference>
<dbReference type="SMART" id="SM00353">
    <property type="entry name" value="HLH"/>
    <property type="match status" value="1"/>
</dbReference>
<dbReference type="SUPFAM" id="SSF47459">
    <property type="entry name" value="HLH, helix-loop-helix DNA-binding domain"/>
    <property type="match status" value="1"/>
</dbReference>
<dbReference type="PROSITE" id="PS50888">
    <property type="entry name" value="BHLH"/>
    <property type="match status" value="1"/>
</dbReference>
<organism>
    <name type="scientific">Xenopus laevis</name>
    <name type="common">African clawed frog</name>
    <dbReference type="NCBI Taxonomy" id="8355"/>
    <lineage>
        <taxon>Eukaryota</taxon>
        <taxon>Metazoa</taxon>
        <taxon>Chordata</taxon>
        <taxon>Craniata</taxon>
        <taxon>Vertebrata</taxon>
        <taxon>Euteleostomi</taxon>
        <taxon>Amphibia</taxon>
        <taxon>Batrachia</taxon>
        <taxon>Anura</taxon>
        <taxon>Pipoidea</taxon>
        <taxon>Pipidae</taxon>
        <taxon>Xenopodinae</taxon>
        <taxon>Xenopus</taxon>
        <taxon>Xenopus</taxon>
    </lineage>
</organism>
<sequence>MELLPPALRDMEETEGSLCAFPTPDHFYDDPCFNSSDMSFFEELEPRLVHVTLLKRGPRHEEEEEEHVRAPSGHHQAGRCLLWACKACKRKSSGADRRRAATMRERRRLSKVNDAFETLKRCTSTNPNQRLPKVDILRNAISYIDSLQTLLRDQEQSLYPNMEHYSGDSDASSPSSNCSDGMNSPPCSSRRRNSYDSNFYTDSPNDVRLGKSSMISSLDCLSSIVERISTQSPSCPAPISVDSGSEGSPCSPLQGETLSDRGIPISSPGNSCTQLSHDPSSTIYQIL</sequence>
<name>MYODB_XENLA</name>
<accession>P16076</accession>
<proteinExistence type="evidence at transcript level"/>
<gene>
    <name type="primary">myod1-b</name>
    <name type="synonym">mf25</name>
</gene>
<feature type="chain" id="PRO_0000127371" description="Myoblast determination protein 1 homolog B">
    <location>
        <begin position="1"/>
        <end position="287"/>
    </location>
</feature>
<feature type="domain" description="bHLH" evidence="2">
    <location>
        <begin position="96"/>
        <end position="147"/>
    </location>
</feature>
<feature type="region of interest" description="Disordered" evidence="3">
    <location>
        <begin position="161"/>
        <end position="202"/>
    </location>
</feature>
<feature type="region of interest" description="Disordered" evidence="3">
    <location>
        <begin position="231"/>
        <end position="277"/>
    </location>
</feature>
<feature type="compositionally biased region" description="Low complexity" evidence="3">
    <location>
        <begin position="168"/>
        <end position="188"/>
    </location>
</feature>
<feature type="compositionally biased region" description="Polar residues" evidence="3">
    <location>
        <begin position="267"/>
        <end position="277"/>
    </location>
</feature>
<reference key="1">
    <citation type="journal article" date="1990" name="Mol. Cell. Biol.">
        <title>Two distinct Xenopus genes with homology to MyoD1 are expressed before somite formation in early embryogenesis.</title>
        <authorList>
            <person name="Scales J.B."/>
            <person name="Olson E.N."/>
            <person name="Perry M."/>
        </authorList>
    </citation>
    <scope>NUCLEOTIDE SEQUENCE [MRNA]</scope>
</reference>
<protein>
    <recommendedName>
        <fullName>Myoblast determination protein 1 homolog B</fullName>
    </recommendedName>
    <alternativeName>
        <fullName>Myogenic factor 25</fullName>
    </alternativeName>
</protein>
<keyword id="KW-0010">Activator</keyword>
<keyword id="KW-0217">Developmental protein</keyword>
<keyword id="KW-0221">Differentiation</keyword>
<keyword id="KW-0238">DNA-binding</keyword>
<keyword id="KW-0517">Myogenesis</keyword>
<keyword id="KW-0539">Nucleus</keyword>
<keyword id="KW-1185">Reference proteome</keyword>
<keyword id="KW-0804">Transcription</keyword>
<keyword id="KW-0805">Transcription regulation</keyword>
<comment type="function">
    <text evidence="1">May act as a transcriptional activator that promotes transcription of muscle-specific target genes and plays a role in muscle differentiation.</text>
</comment>
<comment type="subunit">
    <text>Efficient DNA binding requires dimerization with another bHLH protein.</text>
</comment>
<comment type="subcellular location">
    <subcellularLocation>
        <location evidence="4">Nucleus</location>
    </subcellularLocation>
</comment>